<accession>P04603</accession>
<gene>
    <name evidence="1" type="primary">nef</name>
</gene>
<sequence length="209" mass="23645">MGGKWSKSSIVGWPKIRERIRRTPPTETGVGAVSQDAVSQDLDKCGAAASSSPAANNASCEPPEEEEEVGFPVRPQVPLRPMTYKGAFDLSHFLKEKGGLDGLVWSPKRQEILDLWVYHTQGYFPDWQNYTPGPGIRFPLTFGWCFKLVPMSPEEVEEANEGENNCLLHPISQHGMEDAEREVLKWKFDSSLALRHRAREQHPEYYKDC</sequence>
<keyword id="KW-0002">3D-structure</keyword>
<keyword id="KW-0014">AIDS</keyword>
<keyword id="KW-0053">Apoptosis</keyword>
<keyword id="KW-0244">Early protein</keyword>
<keyword id="KW-1032">Host cell membrane</keyword>
<keyword id="KW-1040">Host Golgi apparatus</keyword>
<keyword id="KW-1043">Host membrane</keyword>
<keyword id="KW-0945">Host-virus interaction</keyword>
<keyword id="KW-1080">Inhibition of host adaptive immune response by virus</keyword>
<keyword id="KW-1083">Inhibition of host autophagy by virus</keyword>
<keyword id="KW-1115">Inhibition of host MHC class I molecule presentation by virus</keyword>
<keyword id="KW-1116">Inhibition of host MHC class II molecule presentation by virus</keyword>
<keyword id="KW-0449">Lipoprotein</keyword>
<keyword id="KW-0472">Membrane</keyword>
<keyword id="KW-0519">Myristate</keyword>
<keyword id="KW-0597">Phosphoprotein</keyword>
<keyword id="KW-1185">Reference proteome</keyword>
<keyword id="KW-0964">Secreted</keyword>
<keyword id="KW-0729">SH3-binding</keyword>
<keyword id="KW-0899">Viral immunoevasion</keyword>
<keyword id="KW-0946">Virion</keyword>
<keyword id="KW-0843">Virulence</keyword>
<comment type="function">
    <text evidence="1">Factor of infectivity and pathogenicity, required for optimal virus replication. Alters numerous pathways of T-lymphocyte function and down-regulates immunity surface molecules in order to evade host defense and increase viral infectivity. Alters the functionality of other immunity cells, like dendritic cells, monocytes/macrophages and NK cells.</text>
</comment>
<comment type="function">
    <text evidence="1">In infected CD4(+) T-lymphocytes, down-regulates the surface MHC-I, mature MHC-II, CD4, CD28, CCR5 and CXCR4 molecules. Mediates internalization and degradation of host CD4 through the interaction of with the cytoplasmic tail of CD4, the recruitment of AP-2 (clathrin adapter protein complex 2), internalization through clathrin coated pits, and subsequent transport to endosomes and lysosomes for degradation. Diverts host MHC-I molecules to the trans-Golgi network-associated endosomal compartments by an endocytic pathway to finally target them for degradation. MHC-I down-regulation may involve AP-1 (clathrin adapter protein complex 1) or possibly Src family kinase-ZAP70/Syk-PI3K cascade recruited by PACS2. In consequence infected cells are masked for immune recognition by cytotoxic T-lymphocytes. Decreasing the number of immune receptors also prevents reinfection by more HIV particles (superinfection). Down-regulates host SERINC3 and SERINC5 thereby excluding these proteins from the viral particles. Virion infectivity is drastically higher when SERINC3 or SERINC5 are excluded from the viral envelope, because these host antiviral proteins impair the membrane fusion event necessary for subsequent virion penetration.</text>
</comment>
<comment type="function">
    <text evidence="1">Bypasses host T-cell signaling by inducing a transcriptional program nearly identical to that of anti-CD3 cell activation. Interaction with TCR-zeta chain up-regulates the Fas ligand (FasL). Increasing surface FasL molecules and decreasing surface MHC-I molecules on infected CD4(+) cells send attacking cytotoxic CD8+ T-lymphocytes into apoptosis.</text>
</comment>
<comment type="function">
    <text evidence="1">Plays a role in optimizing the host cell environment for viral replication without causing cell death by apoptosis. Protects the infected cells from apoptosis in order to keep them alive until the next virus generation is ready to strike. Inhibits the Fas and TNFR-mediated death signals by blocking MAP3K5/ASK1. Decreases the half-life of TP53, protecting the infected cell against p53-mediated apoptosis. Inhibits the apoptotic signals regulated by the Bcl-2 family proteins through the formation of a Nef/PI3-kinase/PAK2 complex that leads to activation of PAK2 and induces phosphorylation of host BAD.</text>
</comment>
<comment type="function">
    <text evidence="1">Extracellular Nef protein targets CD4(+) T-lymphocytes for apoptosis by interacting with CXCR4 surface receptors.</text>
</comment>
<comment type="subunit">
    <text evidence="1">Monomer; cytosolic form. Homodimer; membrane bound form. Interacts with Nef associated p21-activated kinase (PAK2); this interaction activates PAK2. Associates with the Nef-MHC-I-AP1 complex; this complex is required for MHC-I internalization. Interacts (via C-terminus) with host PI3-kinase. Interacts with host PACS1; this interaction seems to be weak. Interacts with host PACS2. Interacts with host LCK and MAPK3; these interactions inhibit the kinase activity of the latter. Interacts with host ATP6V1H; this interaction may play a role in CD4 endocytosis. Associates with the CD4-Nef-AP2 complex; this complex is required for CD4 internalization. Interacts with host AP2 subunit alpha and AP2 subunit sigma2. Interacts with TCR-zeta chain; this interaction up-regulates the Fas ligand (FasL) surface expression. Interacts with host HCK, LYN, and SRC; these interactions activate the Src family kinases. Interacts with MAP3K5; this interaction inhibits the Fas and TNFR-mediated death signals. Interacts with beta-COP and PTE1. Interacts with human RACK1; this increases Nef phosphorylation by PKC. Interacts with TP53; this interaction decreases the half-life of TP53, protecting the infected cell against p53-mediated apoptosis.</text>
</comment>
<comment type="subcellular location">
    <subcellularLocation>
        <location evidence="1">Host cell membrane</location>
        <topology evidence="1">Lipid-anchor</topology>
        <orientation evidence="1">Cytoplasmic side</orientation>
    </subcellularLocation>
    <subcellularLocation>
        <location evidence="1">Virion</location>
    </subcellularLocation>
    <subcellularLocation>
        <location evidence="1">Secreted</location>
    </subcellularLocation>
    <subcellularLocation>
        <location evidence="1">Host Golgi apparatus membrane</location>
    </subcellularLocation>
    <text evidence="1">TGN localization requires PACS1. Associates with the inner plasma membrane through its N-terminal domain. Nef stimulates its own export via the release of exosomes. Incorporated in virions at a rate of about 10 molecules per virion, where it is cleaved.</text>
</comment>
<comment type="induction">
    <text evidence="1">Expressed early in the viral replication cycle.</text>
</comment>
<comment type="domain">
    <text evidence="1">The N-terminal domain is composed of the N-myristoyl glycine and of a cluster of positively charged amino acids. It is required for inner plasma membrane targeting of Nef and virion incorporation, and thereby for infectivity. This domain is also involved in binding to TP53.</text>
</comment>
<comment type="domain">
    <text evidence="1">The SH3-binding domain constituted of PxxP motifs mediates binding to several Src family proteins thereby regulating their tyrosine kinase activity. The same motifs also mediates the association with MAPK3, PI3-kinase and TCR-zeta.</text>
</comment>
<comment type="domain">
    <text evidence="1">The dileucine internalization motif and a diacidic motif seem to be required for binding to AP-2.</text>
</comment>
<comment type="domain">
    <text evidence="1">The acidic region binds to the sorting protein PACS-2, which targets Nef to the paranuclear region, enabling the PxxP motif to direct assembly of an SFK/ZAP-70/PI3K complex that accelerates endocytosis of cell-surface MHC-I.</text>
</comment>
<comment type="PTM">
    <text evidence="1">The virion-associated Nef proteins are cleaved by the viral protease to release the soluble C-terminal core protein. Nef is probably cleaved concomitantly with viral structural proteins on maturation of virus particles.</text>
</comment>
<comment type="PTM">
    <text evidence="1">Myristoylated.</text>
</comment>
<comment type="PTM">
    <text evidence="1">Phosphorylated on serine residues, probably by host PKCdelta and theta.</text>
</comment>
<comment type="miscellaneous">
    <text evidence="1">HIV-1 lineages are divided in three main groups, M (for Major), O (for Outlier), and N (for New, or Non-M, Non-O). The vast majority of strains found worldwide belong to the group M. Group O seems to be endemic to and largely confined to Cameroon and neighboring countries in West Central Africa, where these viruses represent a small minority of HIV-1 strains. The group N is represented by a limited number of isolates from Cameroonian persons. The group M is further subdivided in 9 clades or subtypes (A to D, F to H, J and K).</text>
</comment>
<comment type="similarity">
    <text evidence="1">Belongs to the lentivirus primate group Nef protein family.</text>
</comment>
<dbReference type="EMBL" id="X04415">
    <property type="protein sequence ID" value="CAA28017.1"/>
    <property type="molecule type" value="Genomic_RNA"/>
</dbReference>
<dbReference type="PIR" id="T01673">
    <property type="entry name" value="T01673"/>
</dbReference>
<dbReference type="PDB" id="3W0W">
    <property type="method" value="X-ray"/>
    <property type="resolution" value="2.60 A"/>
    <property type="chains" value="C=137-146"/>
</dbReference>
<dbReference type="PDB" id="3WL9">
    <property type="method" value="X-ray"/>
    <property type="resolution" value="1.66 A"/>
    <property type="chains" value="C=129-138"/>
</dbReference>
<dbReference type="PDBsum" id="3W0W"/>
<dbReference type="PDBsum" id="3WL9"/>
<dbReference type="SMR" id="P04603"/>
<dbReference type="EvolutionaryTrace" id="P04603"/>
<dbReference type="Proteomes" id="UP000007696">
    <property type="component" value="Genome"/>
</dbReference>
<dbReference type="GO" id="GO:0005576">
    <property type="term" value="C:extracellular region"/>
    <property type="evidence" value="ECO:0007669"/>
    <property type="project" value="UniProtKB-SubCell"/>
</dbReference>
<dbReference type="GO" id="GO:0044178">
    <property type="term" value="C:host cell Golgi membrane"/>
    <property type="evidence" value="ECO:0007669"/>
    <property type="project" value="UniProtKB-SubCell"/>
</dbReference>
<dbReference type="GO" id="GO:0020002">
    <property type="term" value="C:host cell plasma membrane"/>
    <property type="evidence" value="ECO:0007669"/>
    <property type="project" value="UniProtKB-SubCell"/>
</dbReference>
<dbReference type="GO" id="GO:0016020">
    <property type="term" value="C:membrane"/>
    <property type="evidence" value="ECO:0007669"/>
    <property type="project" value="UniProtKB-UniRule"/>
</dbReference>
<dbReference type="GO" id="GO:0044423">
    <property type="term" value="C:virion component"/>
    <property type="evidence" value="ECO:0007669"/>
    <property type="project" value="UniProtKB-UniRule"/>
</dbReference>
<dbReference type="GO" id="GO:0005525">
    <property type="term" value="F:GTP binding"/>
    <property type="evidence" value="ECO:0007669"/>
    <property type="project" value="UniProtKB-UniRule"/>
</dbReference>
<dbReference type="GO" id="GO:0017124">
    <property type="term" value="F:SH3 domain binding"/>
    <property type="evidence" value="ECO:0007669"/>
    <property type="project" value="UniProtKB-UniRule"/>
</dbReference>
<dbReference type="GO" id="GO:0046776">
    <property type="term" value="P:symbiont-mediated suppression of host antigen processing and presentation of peptide antigen via MHC class I"/>
    <property type="evidence" value="ECO:0007669"/>
    <property type="project" value="UniProtKB-UniRule"/>
</dbReference>
<dbReference type="GO" id="GO:0039505">
    <property type="term" value="P:symbiont-mediated suppression of host antigen processing and presentation of peptide antigen via MHC class II"/>
    <property type="evidence" value="ECO:0007669"/>
    <property type="project" value="UniProtKB-UniRule"/>
</dbReference>
<dbReference type="GO" id="GO:0140321">
    <property type="term" value="P:symbiont-mediated suppression of host autophagy"/>
    <property type="evidence" value="ECO:0007669"/>
    <property type="project" value="UniProtKB-KW"/>
</dbReference>
<dbReference type="Gene3D" id="4.10.890.10">
    <property type="entry name" value="HIV 1 nef anchor domain"/>
    <property type="match status" value="1"/>
</dbReference>
<dbReference type="Gene3D" id="3.30.62.10">
    <property type="entry name" value="Nef Regulatory Factor"/>
    <property type="match status" value="1"/>
</dbReference>
<dbReference type="HAMAP" id="MF_04078">
    <property type="entry name" value="NEF_HIV"/>
    <property type="match status" value="1"/>
</dbReference>
<dbReference type="InterPro" id="IPR027480">
    <property type="entry name" value="HIV-1_Nef_anchor_sf"/>
</dbReference>
<dbReference type="InterPro" id="IPR027481">
    <property type="entry name" value="HIV-1_Nef_core_sf"/>
</dbReference>
<dbReference type="InterPro" id="IPR001558">
    <property type="entry name" value="HIV_Nef"/>
</dbReference>
<dbReference type="Pfam" id="PF00469">
    <property type="entry name" value="F-protein"/>
    <property type="match status" value="1"/>
</dbReference>
<dbReference type="SUPFAM" id="SSF55671">
    <property type="entry name" value="Regulatory factor Nef"/>
    <property type="match status" value="1"/>
</dbReference>
<proteinExistence type="evidence at protein level"/>
<evidence type="ECO:0000255" key="1">
    <source>
        <dbReference type="HAMAP-Rule" id="MF_04078"/>
    </source>
</evidence>
<evidence type="ECO:0000256" key="2">
    <source>
        <dbReference type="SAM" id="MobiDB-lite"/>
    </source>
</evidence>
<reference key="1">
    <citation type="journal article" date="1986" name="Cell">
        <title>Genetic variability of the AIDS virus: nucleotide sequence analysis of two isolates from African patients.</title>
        <authorList>
            <person name="Alizon M."/>
            <person name="Wain-Hobson S."/>
            <person name="Montagnier L."/>
            <person name="Sonigo P."/>
        </authorList>
    </citation>
    <scope>NUCLEOTIDE SEQUENCE [GENOMIC RNA]</scope>
</reference>
<name>NEF_HV1MA</name>
<protein>
    <recommendedName>
        <fullName evidence="1">Protein Nef</fullName>
    </recommendedName>
    <alternativeName>
        <fullName evidence="1">3'ORF</fullName>
    </alternativeName>
    <alternativeName>
        <fullName evidence="1">Negative factor</fullName>
        <shortName evidence="1">F-protein</shortName>
    </alternativeName>
    <component>
        <recommendedName>
            <fullName evidence="1">C-terminal core protein</fullName>
        </recommendedName>
    </component>
</protein>
<feature type="initiator methionine" description="Removed; by host" evidence="1">
    <location>
        <position position="1"/>
    </location>
</feature>
<feature type="chain" id="PRO_0000440994" description="Protein Nef" evidence="1">
    <location>
        <begin position="2"/>
        <end position="209"/>
    </location>
</feature>
<feature type="chain" id="PRO_0000440995" description="C-terminal core protein" evidence="1">
    <location>
        <begin position="62"/>
        <end position="209"/>
    </location>
</feature>
<feature type="region of interest" description="Disordered" evidence="2">
    <location>
        <begin position="16"/>
        <end position="35"/>
    </location>
</feature>
<feature type="region of interest" description="Disordered" evidence="2">
    <location>
        <begin position="43"/>
        <end position="71"/>
    </location>
</feature>
<feature type="region of interest" description="Acidic; interacts with host PACS1 and PACS2; stabilizes the interaction of NEF/MHC-I with host AP1M1; necessary for MHC-I internalization" evidence="1">
    <location>
        <begin position="65"/>
        <end position="68"/>
    </location>
</feature>
<feature type="region of interest" description="SH3-binding; interaction with Src family tyrosine kinases" evidence="1">
    <location>
        <begin position="72"/>
        <end position="81"/>
    </location>
</feature>
<feature type="region of interest" description="Mediates dimerization, Nef-PTE1 interaction" evidence="1">
    <location>
        <begin position="111"/>
        <end position="127"/>
    </location>
</feature>
<feature type="region of interest" description="Binding to ATP6V1H" evidence="1">
    <location>
        <begin position="151"/>
        <end position="183"/>
    </location>
</feature>
<feature type="short sequence motif" description="PxxP; stabilizes the interaction of NEF/MHC-I with host AP1M1; necessary for MHC-I internalization" evidence="1">
    <location>
        <begin position="75"/>
        <end position="78"/>
    </location>
</feature>
<feature type="short sequence motif" description="Dileucine internalization motif; necessary for CD4 internalization" evidence="1">
    <location>
        <begin position="167"/>
        <end position="168"/>
    </location>
</feature>
<feature type="short sequence motif" description="Diacidic; necessary for CD4 internalization" evidence="1">
    <location>
        <begin position="177"/>
        <end position="178"/>
    </location>
</feature>
<feature type="compositionally biased region" description="Low complexity" evidence="2">
    <location>
        <begin position="47"/>
        <end position="61"/>
    </location>
</feature>
<feature type="modified residue" description="Phosphoserine; by host" evidence="1">
    <location>
        <position position="6"/>
    </location>
</feature>
<feature type="lipid moiety-binding region" description="N-myristoyl glycine; by host" evidence="1">
    <location>
        <position position="2"/>
    </location>
</feature>
<organism>
    <name type="scientific">Human immunodeficiency virus type 1 group M subtype A (isolate MAL)</name>
    <name type="common">HIV-1</name>
    <dbReference type="NCBI Taxonomy" id="11697"/>
    <lineage>
        <taxon>Viruses</taxon>
        <taxon>Riboviria</taxon>
        <taxon>Pararnavirae</taxon>
        <taxon>Artverviricota</taxon>
        <taxon>Revtraviricetes</taxon>
        <taxon>Ortervirales</taxon>
        <taxon>Retroviridae</taxon>
        <taxon>Orthoretrovirinae</taxon>
        <taxon>Lentivirus</taxon>
        <taxon>Human immunodeficiency virus type 1</taxon>
    </lineage>
</organism>
<organismHost>
    <name type="scientific">Homo sapiens</name>
    <name type="common">Human</name>
    <dbReference type="NCBI Taxonomy" id="9606"/>
</organismHost>